<keyword id="KW-0653">Protein transport</keyword>
<keyword id="KW-1185">Reference proteome</keyword>
<keyword id="KW-0813">Transport</keyword>
<protein>
    <recommendedName>
        <fullName>Protein MON2 homolog</fullName>
    </recommendedName>
</protein>
<accession>Q9VLT1</accession>
<accession>A8WHI7</accession>
<accession>Q961N6</accession>
<accession>Q9VLT2</accession>
<organism>
    <name type="scientific">Drosophila melanogaster</name>
    <name type="common">Fruit fly</name>
    <dbReference type="NCBI Taxonomy" id="7227"/>
    <lineage>
        <taxon>Eukaryota</taxon>
        <taxon>Metazoa</taxon>
        <taxon>Ecdysozoa</taxon>
        <taxon>Arthropoda</taxon>
        <taxon>Hexapoda</taxon>
        <taxon>Insecta</taxon>
        <taxon>Pterygota</taxon>
        <taxon>Neoptera</taxon>
        <taxon>Endopterygota</taxon>
        <taxon>Diptera</taxon>
        <taxon>Brachycera</taxon>
        <taxon>Muscomorpha</taxon>
        <taxon>Ephydroidea</taxon>
        <taxon>Drosophilidae</taxon>
        <taxon>Drosophila</taxon>
        <taxon>Sophophora</taxon>
    </lineage>
</organism>
<sequence length="1684" mass="186993">MSFVGGGGCGGQDVHKFVEALQADFKTLSLETKKKYPQIKEACEEAISKLCTAGSSQQNSVYYTVNQILYPLVQGCETKDLKIIKFCLGMMQRLITQQVVDQKGALYITNALWTLMENNIEEVKVLQTVTLLLTTNTVVHGDTLAKALVLCFRLHYAKNPTIVNTAGATIRQLVSLVFERVYLEKDSVSSLQQQQSSGSPAEGEGGNQDVQTFASDAFLLFQDLVQLVNADQPYWLLGMTEMTRTFGLELLEAVLTNFSAVFHESNDFRLLLKERVCALVIKLFSPNVKHRQLPAPSNGNAPVPAEKPYFPISMRLLRLVAILIQKYHTILVTECEIFLSLIIKFLDPDKPAWQRALALEVIHKLVTRSSLIAFFCKSYDLKNHATNIVHDMIAAMGSYIRYSLINASAMLNGQQNGVANSLTAMSGSNQCGFMFRGAYLPLVATYAPGVSKAVYLEMLDKIDASNIPDSYGISVGHAILLDMTRSIGGVIQRTPELHPSHNTAVITEEEHKPLCLQLVNSSWSALLSAFIPLVETSIDEATTENILKAMQNYAALCGMLEQLQPRDAFIMAMCRASFPPHYAMSIFANTTQSDGDLRCHTRSGSQDLSSQFINSCSGDAGDFRPQIVAVGTPLPSASLPHSVMQAPVMLTNKNLQCMRAILFLAHNNGGILGTSWHIVLQTLQHLVWILGLKPSTGGSLQAMPKPAVEANVGIQTAVMADLPVLSQMLSQLFESSQYLDDVALHHLIDALCKLSHEAMELAYANREPSLFAVAKLLETGLVNMPRIKVLWRPLTNHLLEVCQHRHIRMREWGVEAITYLVKSALQFKHKTPLKENMELQTMLLSPLSELSTVLHADVRQRQLDCVLQILNTAGEILSFGWPAIIEIIGAVNEHHGEPLIRTAFQCLQLVITDFLTVMPWRCLPLCISTAAKFGSQTQELNISLTAIGLMWNISDFFNQNQDKLMSTQLQDVSILPDFPGTVKMPQFDKLWMCLYAKLGELCVDLRPAVRKSAGQTLFSTISAHGSLLNPPTWQALVWQVLFPLLDNVRALSSSASNEKVDASGNILIHHSRNTAQKQWAETQVLTLSGVCRVFNTKRELLQMLGDFERAWSLILEFIQNAALSKNGEVSLAALKSLQEIMYHNTAERTERALKDPQTAQEQDEEIWTIAWNIWLSIGMESTKMSTSTSAKLQQQNSNGAETQEDFYIPSQAFLTALIQIFPAIFQHIQVKFTAADFDKFCTVLTNAVCIPVQTDAVPYIMSTVSDTLLTPLHDGILDCMELIQKEATKPDSHISQLIPAIFRQLLIFSKFACAPPTFQQSVEHKYAKSSGHYANNASVEVVSMNYIPFGEKSISICVKLYQTTATEDSVVQEQILHDIVKALRTPLAMKYKCLSSSTWKLAISSLISVLHTGLKVARAKPQHFASLWDDLADTLDKFLFPASVCTIEDRGLEEIVLDETIDCQVIELLRDEVLPHSHEMPHQFIMQIVVLLNKGSIHSASDTNICYESDWKLREIFAKTCFETLLQFSLLEDHANTNNNRLNANVLTAGAAGAGGKDFAGRLAVTALLHRFQEVLKRFNDDERQSGKCPLPRFRLSEISFVLKAIATLVVSMKKAPASKVNKPAWDQLIGLYPYLVDCTTTTSPEVSRSLREALLQYTDLLQAPRSCSAATSNDNVIQSNGQE</sequence>
<reference key="1">
    <citation type="journal article" date="2000" name="Science">
        <title>The genome sequence of Drosophila melanogaster.</title>
        <authorList>
            <person name="Adams M.D."/>
            <person name="Celniker S.E."/>
            <person name="Holt R.A."/>
            <person name="Evans C.A."/>
            <person name="Gocayne J.D."/>
            <person name="Amanatides P.G."/>
            <person name="Scherer S.E."/>
            <person name="Li P.W."/>
            <person name="Hoskins R.A."/>
            <person name="Galle R.F."/>
            <person name="George R.A."/>
            <person name="Lewis S.E."/>
            <person name="Richards S."/>
            <person name="Ashburner M."/>
            <person name="Henderson S.N."/>
            <person name="Sutton G.G."/>
            <person name="Wortman J.R."/>
            <person name="Yandell M.D."/>
            <person name="Zhang Q."/>
            <person name="Chen L.X."/>
            <person name="Brandon R.C."/>
            <person name="Rogers Y.-H.C."/>
            <person name="Blazej R.G."/>
            <person name="Champe M."/>
            <person name="Pfeiffer B.D."/>
            <person name="Wan K.H."/>
            <person name="Doyle C."/>
            <person name="Baxter E.G."/>
            <person name="Helt G."/>
            <person name="Nelson C.R."/>
            <person name="Miklos G.L.G."/>
            <person name="Abril J.F."/>
            <person name="Agbayani A."/>
            <person name="An H.-J."/>
            <person name="Andrews-Pfannkoch C."/>
            <person name="Baldwin D."/>
            <person name="Ballew R.M."/>
            <person name="Basu A."/>
            <person name="Baxendale J."/>
            <person name="Bayraktaroglu L."/>
            <person name="Beasley E.M."/>
            <person name="Beeson K.Y."/>
            <person name="Benos P.V."/>
            <person name="Berman B.P."/>
            <person name="Bhandari D."/>
            <person name="Bolshakov S."/>
            <person name="Borkova D."/>
            <person name="Botchan M.R."/>
            <person name="Bouck J."/>
            <person name="Brokstein P."/>
            <person name="Brottier P."/>
            <person name="Burtis K.C."/>
            <person name="Busam D.A."/>
            <person name="Butler H."/>
            <person name="Cadieu E."/>
            <person name="Center A."/>
            <person name="Chandra I."/>
            <person name="Cherry J.M."/>
            <person name="Cawley S."/>
            <person name="Dahlke C."/>
            <person name="Davenport L.B."/>
            <person name="Davies P."/>
            <person name="de Pablos B."/>
            <person name="Delcher A."/>
            <person name="Deng Z."/>
            <person name="Mays A.D."/>
            <person name="Dew I."/>
            <person name="Dietz S.M."/>
            <person name="Dodson K."/>
            <person name="Doup L.E."/>
            <person name="Downes M."/>
            <person name="Dugan-Rocha S."/>
            <person name="Dunkov B.C."/>
            <person name="Dunn P."/>
            <person name="Durbin K.J."/>
            <person name="Evangelista C.C."/>
            <person name="Ferraz C."/>
            <person name="Ferriera S."/>
            <person name="Fleischmann W."/>
            <person name="Fosler C."/>
            <person name="Gabrielian A.E."/>
            <person name="Garg N.S."/>
            <person name="Gelbart W.M."/>
            <person name="Glasser K."/>
            <person name="Glodek A."/>
            <person name="Gong F."/>
            <person name="Gorrell J.H."/>
            <person name="Gu Z."/>
            <person name="Guan P."/>
            <person name="Harris M."/>
            <person name="Harris N.L."/>
            <person name="Harvey D.A."/>
            <person name="Heiman T.J."/>
            <person name="Hernandez J.R."/>
            <person name="Houck J."/>
            <person name="Hostin D."/>
            <person name="Houston K.A."/>
            <person name="Howland T.J."/>
            <person name="Wei M.-H."/>
            <person name="Ibegwam C."/>
            <person name="Jalali M."/>
            <person name="Kalush F."/>
            <person name="Karpen G.H."/>
            <person name="Ke Z."/>
            <person name="Kennison J.A."/>
            <person name="Ketchum K.A."/>
            <person name="Kimmel B.E."/>
            <person name="Kodira C.D."/>
            <person name="Kraft C.L."/>
            <person name="Kravitz S."/>
            <person name="Kulp D."/>
            <person name="Lai Z."/>
            <person name="Lasko P."/>
            <person name="Lei Y."/>
            <person name="Levitsky A.A."/>
            <person name="Li J.H."/>
            <person name="Li Z."/>
            <person name="Liang Y."/>
            <person name="Lin X."/>
            <person name="Liu X."/>
            <person name="Mattei B."/>
            <person name="McIntosh T.C."/>
            <person name="McLeod M.P."/>
            <person name="McPherson D."/>
            <person name="Merkulov G."/>
            <person name="Milshina N.V."/>
            <person name="Mobarry C."/>
            <person name="Morris J."/>
            <person name="Moshrefi A."/>
            <person name="Mount S.M."/>
            <person name="Moy M."/>
            <person name="Murphy B."/>
            <person name="Murphy L."/>
            <person name="Muzny D.M."/>
            <person name="Nelson D.L."/>
            <person name="Nelson D.R."/>
            <person name="Nelson K.A."/>
            <person name="Nixon K."/>
            <person name="Nusskern D.R."/>
            <person name="Pacleb J.M."/>
            <person name="Palazzolo M."/>
            <person name="Pittman G.S."/>
            <person name="Pan S."/>
            <person name="Pollard J."/>
            <person name="Puri V."/>
            <person name="Reese M.G."/>
            <person name="Reinert K."/>
            <person name="Remington K."/>
            <person name="Saunders R.D.C."/>
            <person name="Scheeler F."/>
            <person name="Shen H."/>
            <person name="Shue B.C."/>
            <person name="Siden-Kiamos I."/>
            <person name="Simpson M."/>
            <person name="Skupski M.P."/>
            <person name="Smith T.J."/>
            <person name="Spier E."/>
            <person name="Spradling A.C."/>
            <person name="Stapleton M."/>
            <person name="Strong R."/>
            <person name="Sun E."/>
            <person name="Svirskas R."/>
            <person name="Tector C."/>
            <person name="Turner R."/>
            <person name="Venter E."/>
            <person name="Wang A.H."/>
            <person name="Wang X."/>
            <person name="Wang Z.-Y."/>
            <person name="Wassarman D.A."/>
            <person name="Weinstock G.M."/>
            <person name="Weissenbach J."/>
            <person name="Williams S.M."/>
            <person name="Woodage T."/>
            <person name="Worley K.C."/>
            <person name="Wu D."/>
            <person name="Yang S."/>
            <person name="Yao Q.A."/>
            <person name="Ye J."/>
            <person name="Yeh R.-F."/>
            <person name="Zaveri J.S."/>
            <person name="Zhan M."/>
            <person name="Zhang G."/>
            <person name="Zhao Q."/>
            <person name="Zheng L."/>
            <person name="Zheng X.H."/>
            <person name="Zhong F.N."/>
            <person name="Zhong W."/>
            <person name="Zhou X."/>
            <person name="Zhu S.C."/>
            <person name="Zhu X."/>
            <person name="Smith H.O."/>
            <person name="Gibbs R.A."/>
            <person name="Myers E.W."/>
            <person name="Rubin G.M."/>
            <person name="Venter J.C."/>
        </authorList>
    </citation>
    <scope>NUCLEOTIDE SEQUENCE [LARGE SCALE GENOMIC DNA]</scope>
    <source>
        <strain>Berkeley</strain>
    </source>
</reference>
<reference key="2">
    <citation type="journal article" date="2002" name="Genome Biol.">
        <title>Annotation of the Drosophila melanogaster euchromatic genome: a systematic review.</title>
        <authorList>
            <person name="Misra S."/>
            <person name="Crosby M.A."/>
            <person name="Mungall C.J."/>
            <person name="Matthews B.B."/>
            <person name="Campbell K.S."/>
            <person name="Hradecky P."/>
            <person name="Huang Y."/>
            <person name="Kaminker J.S."/>
            <person name="Millburn G.H."/>
            <person name="Prochnik S.E."/>
            <person name="Smith C.D."/>
            <person name="Tupy J.L."/>
            <person name="Whitfield E.J."/>
            <person name="Bayraktaroglu L."/>
            <person name="Berman B.P."/>
            <person name="Bettencourt B.R."/>
            <person name="Celniker S.E."/>
            <person name="de Grey A.D.N.J."/>
            <person name="Drysdale R.A."/>
            <person name="Harris N.L."/>
            <person name="Richter J."/>
            <person name="Russo S."/>
            <person name="Schroeder A.J."/>
            <person name="Shu S.Q."/>
            <person name="Stapleton M."/>
            <person name="Yamada C."/>
            <person name="Ashburner M."/>
            <person name="Gelbart W.M."/>
            <person name="Rubin G.M."/>
            <person name="Lewis S.E."/>
        </authorList>
    </citation>
    <scope>GENOME REANNOTATION</scope>
    <source>
        <strain>Berkeley</strain>
    </source>
</reference>
<reference key="3">
    <citation type="submission" date="2007-11" db="EMBL/GenBank/DDBJ databases">
        <authorList>
            <person name="Stapleton M."/>
            <person name="Carlson J.W."/>
            <person name="Frise E."/>
            <person name="Kapadia B."/>
            <person name="Park S."/>
            <person name="Wan K.H."/>
            <person name="Yu C."/>
            <person name="Celniker S.E."/>
        </authorList>
    </citation>
    <scope>NUCLEOTIDE SEQUENCE [LARGE SCALE MRNA]</scope>
    <source>
        <strain>Berkeley</strain>
        <tissue>Head</tissue>
    </source>
</reference>
<reference key="4">
    <citation type="journal article" date="2002" name="Genome Biol.">
        <title>A Drosophila full-length cDNA resource.</title>
        <authorList>
            <person name="Stapleton M."/>
            <person name="Carlson J.W."/>
            <person name="Brokstein P."/>
            <person name="Yu C."/>
            <person name="Champe M."/>
            <person name="George R.A."/>
            <person name="Guarin H."/>
            <person name="Kronmiller B."/>
            <person name="Pacleb J.M."/>
            <person name="Park S."/>
            <person name="Wan K.H."/>
            <person name="Rubin G.M."/>
            <person name="Celniker S.E."/>
        </authorList>
    </citation>
    <scope>NUCLEOTIDE SEQUENCE [LARGE SCALE MRNA] OF 1202-1684</scope>
    <source>
        <strain>Berkeley</strain>
        <tissue>Head</tissue>
    </source>
</reference>
<reference key="5">
    <citation type="journal article" date="2005" name="J. Cell Sci.">
        <title>Yeast Mon2p is a highly conserved protein that functions in the cytoplasm-to-vacuole transport pathway and is required for Golgi homeostasis.</title>
        <authorList>
            <person name="Efe J.A."/>
            <person name="Plattner F."/>
            <person name="Hulo N."/>
            <person name="Kressler D."/>
            <person name="Emr S.D."/>
            <person name="Deloche O."/>
        </authorList>
    </citation>
    <scope>IDENTIFICATION</scope>
</reference>
<name>MON2_DROME</name>
<feature type="chain" id="PRO_0000297907" description="Protein MON2 homolog">
    <location>
        <begin position="1"/>
        <end position="1684"/>
    </location>
</feature>
<comment type="function">
    <text evidence="1">May be required for traffic between late Golgi and early endosomes.</text>
</comment>
<comment type="similarity">
    <text evidence="2">Belongs to the MON2 family.</text>
</comment>
<comment type="sequence caution" evidence="2">
    <conflict type="erroneous initiation">
        <sequence resource="EMBL-CDS" id="AAK92899"/>
    </conflict>
    <text>Truncated N-terminus.</text>
</comment>
<comment type="sequence caution" evidence="2">
    <conflict type="erroneous initiation">
        <sequence resource="EMBL-CDS" id="AAT47765"/>
    </conflict>
    <text>Truncated N-terminus.</text>
</comment>
<comment type="sequence caution" evidence="2">
    <conflict type="erroneous initiation">
        <sequence resource="EMBL-CDS" id="AAT94417"/>
    </conflict>
    <text>Truncated N-terminus.</text>
</comment>
<proteinExistence type="evidence at transcript level"/>
<evidence type="ECO:0000250" key="1"/>
<evidence type="ECO:0000305" key="2"/>
<dbReference type="EMBL" id="AE014134">
    <property type="protein sequence ID" value="AAF52603.4"/>
    <property type="molecule type" value="Genomic_DNA"/>
</dbReference>
<dbReference type="EMBL" id="BT031133">
    <property type="protein sequence ID" value="ABX00755.1"/>
    <property type="molecule type" value="mRNA"/>
</dbReference>
<dbReference type="EMBL" id="AY051475">
    <property type="protein sequence ID" value="AAK92899.1"/>
    <property type="status" value="ALT_INIT"/>
    <property type="molecule type" value="mRNA"/>
</dbReference>
<dbReference type="EMBL" id="BT014914">
    <property type="protein sequence ID" value="AAT47765.1"/>
    <property type="status" value="ALT_INIT"/>
    <property type="molecule type" value="mRNA"/>
</dbReference>
<dbReference type="EMBL" id="BT015188">
    <property type="protein sequence ID" value="AAT94417.1"/>
    <property type="status" value="ALT_INIT"/>
    <property type="molecule type" value="mRNA"/>
</dbReference>
<dbReference type="RefSeq" id="NP_001033884.2">
    <property type="nucleotide sequence ID" value="NM_001038795.3"/>
</dbReference>
<dbReference type="RefSeq" id="NP_001285739.1">
    <property type="nucleotide sequence ID" value="NM_001298810.1"/>
</dbReference>
<dbReference type="SMR" id="Q9VLT1"/>
<dbReference type="BioGRID" id="77411">
    <property type="interactions" value="12"/>
</dbReference>
<dbReference type="FunCoup" id="Q9VLT1">
    <property type="interactions" value="1816"/>
</dbReference>
<dbReference type="IntAct" id="Q9VLT1">
    <property type="interactions" value="5"/>
</dbReference>
<dbReference type="STRING" id="7227.FBpp0290447"/>
<dbReference type="PaxDb" id="7227-FBpp0290447"/>
<dbReference type="DNASU" id="326157"/>
<dbReference type="EnsemblMetazoa" id="FBtr0301229">
    <property type="protein sequence ID" value="FBpp0290447"/>
    <property type="gene ID" value="FBgn0031985"/>
</dbReference>
<dbReference type="EnsemblMetazoa" id="FBtr0339674">
    <property type="protein sequence ID" value="FBpp0308731"/>
    <property type="gene ID" value="FBgn0031985"/>
</dbReference>
<dbReference type="GeneID" id="326157"/>
<dbReference type="KEGG" id="dme:Dmel_CG8683"/>
<dbReference type="UCSC" id="CG8683-RA">
    <property type="organism name" value="d. melanogaster"/>
</dbReference>
<dbReference type="AGR" id="FB:FBgn0031985"/>
<dbReference type="CTD" id="23041"/>
<dbReference type="FlyBase" id="FBgn0031985">
    <property type="gene designation" value="mon2"/>
</dbReference>
<dbReference type="VEuPathDB" id="VectorBase:FBgn0031985"/>
<dbReference type="eggNOG" id="KOG1848">
    <property type="taxonomic scope" value="Eukaryota"/>
</dbReference>
<dbReference type="HOGENOM" id="CLU_001169_2_0_1"/>
<dbReference type="InParanoid" id="Q9VLT1"/>
<dbReference type="OMA" id="AWRLCLN"/>
<dbReference type="OrthoDB" id="294853at2759"/>
<dbReference type="PhylomeDB" id="Q9VLT1"/>
<dbReference type="BioGRID-ORCS" id="326157">
    <property type="hits" value="0 hits in 1 CRISPR screen"/>
</dbReference>
<dbReference type="ChiTaRS" id="mon2">
    <property type="organism name" value="fly"/>
</dbReference>
<dbReference type="GenomeRNAi" id="326157"/>
<dbReference type="PRO" id="PR:Q9VLT1"/>
<dbReference type="Proteomes" id="UP000000803">
    <property type="component" value="Chromosome 2L"/>
</dbReference>
<dbReference type="Bgee" id="FBgn0031985">
    <property type="expression patterns" value="Expressed in male accessory gland secondary cell (Drosophila) in male reproductive gland and 142 other cell types or tissues"/>
</dbReference>
<dbReference type="ExpressionAtlas" id="Q9VLT1">
    <property type="expression patterns" value="baseline and differential"/>
</dbReference>
<dbReference type="GO" id="GO:0005768">
    <property type="term" value="C:endosome"/>
    <property type="evidence" value="ECO:0000314"/>
    <property type="project" value="FlyBase"/>
</dbReference>
<dbReference type="GO" id="GO:0005794">
    <property type="term" value="C:Golgi apparatus"/>
    <property type="evidence" value="ECO:0000314"/>
    <property type="project" value="FlyBase"/>
</dbReference>
<dbReference type="GO" id="GO:0005519">
    <property type="term" value="F:cytoskeletal regulatory protein binding"/>
    <property type="evidence" value="ECO:0000353"/>
    <property type="project" value="FlyBase"/>
</dbReference>
<dbReference type="GO" id="GO:0030036">
    <property type="term" value="P:actin cytoskeleton organization"/>
    <property type="evidence" value="ECO:0000315"/>
    <property type="project" value="FlyBase"/>
</dbReference>
<dbReference type="GO" id="GO:0007318">
    <property type="term" value="P:pole plasm protein localization"/>
    <property type="evidence" value="ECO:0000315"/>
    <property type="project" value="FlyBase"/>
</dbReference>
<dbReference type="GO" id="GO:0015031">
    <property type="term" value="P:protein transport"/>
    <property type="evidence" value="ECO:0007669"/>
    <property type="project" value="UniProtKB-KW"/>
</dbReference>
<dbReference type="InterPro" id="IPR016024">
    <property type="entry name" value="ARM-type_fold"/>
</dbReference>
<dbReference type="InterPro" id="IPR032629">
    <property type="entry name" value="DCB_dom"/>
</dbReference>
<dbReference type="InterPro" id="IPR015403">
    <property type="entry name" value="Mon2/Sec7/BIG1-like_HDS"/>
</dbReference>
<dbReference type="InterPro" id="IPR032691">
    <property type="entry name" value="Mon2/Sec7/BIG1-like_HUS"/>
</dbReference>
<dbReference type="InterPro" id="IPR032817">
    <property type="entry name" value="Mon2_C"/>
</dbReference>
<dbReference type="PANTHER" id="PTHR10663">
    <property type="entry name" value="GUANYL-NUCLEOTIDE EXCHANGE FACTOR"/>
    <property type="match status" value="1"/>
</dbReference>
<dbReference type="PANTHER" id="PTHR10663:SF333">
    <property type="entry name" value="PROTEIN MON2 HOMOLOG"/>
    <property type="match status" value="1"/>
</dbReference>
<dbReference type="Pfam" id="PF16213">
    <property type="entry name" value="DCB"/>
    <property type="match status" value="1"/>
</dbReference>
<dbReference type="Pfam" id="PF16206">
    <property type="entry name" value="Mon2_C"/>
    <property type="match status" value="2"/>
</dbReference>
<dbReference type="Pfam" id="PF09324">
    <property type="entry name" value="Sec7-like_HDS"/>
    <property type="match status" value="1"/>
</dbReference>
<dbReference type="Pfam" id="PF12783">
    <property type="entry name" value="Sec7-like_HUS"/>
    <property type="match status" value="1"/>
</dbReference>
<dbReference type="SUPFAM" id="SSF48371">
    <property type="entry name" value="ARM repeat"/>
    <property type="match status" value="1"/>
</dbReference>
<gene>
    <name type="primary">mon2</name>
    <name type="ORF">CG8683</name>
</gene>